<sequence length="81" mass="9573">MIIENQTKRLTQLIKVDVNRMIPLEKIHMWTKYIADEVFRSIPDGDHDLDVVITIDFSGKSGIRRNMKKMIMDSLEEELLR</sequence>
<name>YRB2_CAEEL</name>
<gene>
    <name evidence="1" type="ORF">F58F12.2</name>
</gene>
<keyword id="KW-1185">Reference proteome</keyword>
<reference key="1">
    <citation type="journal article" date="1998" name="Science">
        <title>Genome sequence of the nematode C. elegans: a platform for investigating biology.</title>
        <authorList>
            <consortium name="The C. elegans sequencing consortium"/>
        </authorList>
    </citation>
    <scope>NUCLEOTIDE SEQUENCE [LARGE SCALE GENOMIC DNA]</scope>
    <source>
        <strain>Bristol N2</strain>
    </source>
</reference>
<accession>Q09399</accession>
<evidence type="ECO:0000312" key="1">
    <source>
        <dbReference type="WormBase" id="F58F12.2"/>
    </source>
</evidence>
<feature type="chain" id="PRO_0000065376" description="Uncharacterized protein F58F12.2">
    <location>
        <begin position="1"/>
        <end position="81"/>
    </location>
</feature>
<protein>
    <recommendedName>
        <fullName>Uncharacterized protein F58F12.2</fullName>
    </recommendedName>
</protein>
<dbReference type="EMBL" id="BX284602">
    <property type="protein sequence ID" value="CCD72070.2"/>
    <property type="molecule type" value="Genomic_DNA"/>
</dbReference>
<dbReference type="PIR" id="T16502">
    <property type="entry name" value="T16502"/>
</dbReference>
<dbReference type="RefSeq" id="NP_001364788.1">
    <property type="nucleotide sequence ID" value="NM_001377808.3"/>
</dbReference>
<dbReference type="RefSeq" id="NP_495287.1">
    <property type="nucleotide sequence ID" value="NM_062886.1"/>
</dbReference>
<dbReference type="FunCoup" id="Q09399">
    <property type="interactions" value="1522"/>
</dbReference>
<dbReference type="STRING" id="6239.F58F12.2.1"/>
<dbReference type="PaxDb" id="6239-F58F12.2"/>
<dbReference type="EnsemblMetazoa" id="F58F12.2.1">
    <property type="protein sequence ID" value="F58F12.2.1"/>
    <property type="gene ID" value="WBGene00019062"/>
</dbReference>
<dbReference type="GeneID" id="186538"/>
<dbReference type="UCSC" id="F58F12.2">
    <property type="organism name" value="c. elegans"/>
</dbReference>
<dbReference type="AGR" id="WB:WBGene00019062"/>
<dbReference type="WormBase" id="F58F12.2">
    <property type="protein sequence ID" value="CE54049"/>
    <property type="gene ID" value="WBGene00019062"/>
</dbReference>
<dbReference type="eggNOG" id="ENOG502TIH0">
    <property type="taxonomic scope" value="Eukaryota"/>
</dbReference>
<dbReference type="HOGENOM" id="CLU_1994667_0_0_1"/>
<dbReference type="InParanoid" id="Q09399"/>
<dbReference type="OrthoDB" id="5821826at2759"/>
<dbReference type="PRO" id="PR:Q09399"/>
<dbReference type="Proteomes" id="UP000001940">
    <property type="component" value="Chromosome II"/>
</dbReference>
<dbReference type="Bgee" id="WBGene00019062">
    <property type="expression patterns" value="Expressed in adult organism and 1 other cell type or tissue"/>
</dbReference>
<organism>
    <name type="scientific">Caenorhabditis elegans</name>
    <dbReference type="NCBI Taxonomy" id="6239"/>
    <lineage>
        <taxon>Eukaryota</taxon>
        <taxon>Metazoa</taxon>
        <taxon>Ecdysozoa</taxon>
        <taxon>Nematoda</taxon>
        <taxon>Chromadorea</taxon>
        <taxon>Rhabditida</taxon>
        <taxon>Rhabditina</taxon>
        <taxon>Rhabditomorpha</taxon>
        <taxon>Rhabditoidea</taxon>
        <taxon>Rhabditidae</taxon>
        <taxon>Peloderinae</taxon>
        <taxon>Caenorhabditis</taxon>
    </lineage>
</organism>
<proteinExistence type="predicted"/>